<protein>
    <recommendedName>
        <fullName>Lipase chaperone</fullName>
    </recommendedName>
    <alternativeName>
        <fullName>Lipase activator protein</fullName>
    </alternativeName>
    <alternativeName>
        <fullName>Lipase foldase</fullName>
    </alternativeName>
    <alternativeName>
        <fullName>Lipase helper protein</fullName>
    </alternativeName>
    <alternativeName>
        <fullName>Lipase modulator</fullName>
    </alternativeName>
</protein>
<dbReference type="EMBL" id="BA000037">
    <property type="protein sequence ID" value="BAC94753.1"/>
    <property type="molecule type" value="Genomic_DNA"/>
</dbReference>
<dbReference type="RefSeq" id="WP_011150534.1">
    <property type="nucleotide sequence ID" value="NC_005139.1"/>
</dbReference>
<dbReference type="SMR" id="Q7MK21"/>
<dbReference type="STRING" id="672.VV93_v1c17530"/>
<dbReference type="KEGG" id="vvy:VV1989"/>
<dbReference type="PATRIC" id="fig|196600.6.peg.2017"/>
<dbReference type="eggNOG" id="COG5380">
    <property type="taxonomic scope" value="Bacteria"/>
</dbReference>
<dbReference type="HOGENOM" id="CLU_085683_0_0_6"/>
<dbReference type="Proteomes" id="UP000002675">
    <property type="component" value="Chromosome I"/>
</dbReference>
<dbReference type="GO" id="GO:0005886">
    <property type="term" value="C:plasma membrane"/>
    <property type="evidence" value="ECO:0007669"/>
    <property type="project" value="UniProtKB-SubCell"/>
</dbReference>
<dbReference type="GO" id="GO:0051082">
    <property type="term" value="F:unfolded protein binding"/>
    <property type="evidence" value="ECO:0007669"/>
    <property type="project" value="UniProtKB-UniRule"/>
</dbReference>
<dbReference type="GO" id="GO:0016042">
    <property type="term" value="P:lipid catabolic process"/>
    <property type="evidence" value="ECO:0007669"/>
    <property type="project" value="UniProtKB-UniRule"/>
</dbReference>
<dbReference type="GO" id="GO:0006457">
    <property type="term" value="P:protein folding"/>
    <property type="evidence" value="ECO:0007669"/>
    <property type="project" value="UniProtKB-UniRule"/>
</dbReference>
<dbReference type="HAMAP" id="MF_00790">
    <property type="entry name" value="Lipase_chap"/>
    <property type="match status" value="1"/>
</dbReference>
<dbReference type="InterPro" id="IPR004961">
    <property type="entry name" value="Lipase_chaperone"/>
</dbReference>
<dbReference type="NCBIfam" id="NF002337">
    <property type="entry name" value="PRK01294.1-5"/>
    <property type="match status" value="1"/>
</dbReference>
<dbReference type="Pfam" id="PF03280">
    <property type="entry name" value="Lipase_chap"/>
    <property type="match status" value="1"/>
</dbReference>
<dbReference type="SUPFAM" id="SSF158855">
    <property type="entry name" value="Lipase chaperone-like"/>
    <property type="match status" value="1"/>
</dbReference>
<evidence type="ECO:0000250" key="1"/>
<evidence type="ECO:0000255" key="2"/>
<evidence type="ECO:0000305" key="3"/>
<name>LIFO_VIBVY</name>
<gene>
    <name type="primary">lifO</name>
    <name type="ordered locus">VV1989</name>
</gene>
<reference key="1">
    <citation type="journal article" date="2003" name="Genome Res.">
        <title>Comparative genome analysis of Vibrio vulnificus, a marine pathogen.</title>
        <authorList>
            <person name="Chen C.-Y."/>
            <person name="Wu K.-M."/>
            <person name="Chang Y.-C."/>
            <person name="Chang C.-H."/>
            <person name="Tsai H.-C."/>
            <person name="Liao T.-L."/>
            <person name="Liu Y.-M."/>
            <person name="Chen H.-J."/>
            <person name="Shen A.B.-T."/>
            <person name="Li J.-C."/>
            <person name="Su T.-L."/>
            <person name="Shao C.-P."/>
            <person name="Lee C.-T."/>
            <person name="Hor L.-I."/>
            <person name="Tsai S.-F."/>
        </authorList>
    </citation>
    <scope>NUCLEOTIDE SEQUENCE [LARGE SCALE GENOMIC DNA]</scope>
    <source>
        <strain>YJ016</strain>
    </source>
</reference>
<proteinExistence type="inferred from homology"/>
<keyword id="KW-0997">Cell inner membrane</keyword>
<keyword id="KW-1003">Cell membrane</keyword>
<keyword id="KW-0143">Chaperone</keyword>
<keyword id="KW-0442">Lipid degradation</keyword>
<keyword id="KW-0443">Lipid metabolism</keyword>
<keyword id="KW-0472">Membrane</keyword>
<keyword id="KW-0812">Transmembrane</keyword>
<keyword id="KW-1133">Transmembrane helix</keyword>
<sequence>MKKTALTIITIASGSLGAVYFLPSEPAVQKDIRATSQHDTSVDNTSPKAFLDYSLSTLGEKPWQTITQDVVSEERALGELQLDEQLFALYLRYKQALADLDIEITGSDITSLETLHQAILDLQREYFSAQQIDLIFGEENQLRALALEKARLSEQGYSAEEQKQLWRDHLALQPEYVQESDANRRLMSELAQGEDAQTTYLKRVELVGEAGAQRLEVLDQNRAEFDRVFQHYLVQRSAILDDLGLSDEQKRQQIKMLRETSFDAKQWRRIEALERIADGG</sequence>
<organism>
    <name type="scientific">Vibrio vulnificus (strain YJ016)</name>
    <dbReference type="NCBI Taxonomy" id="196600"/>
    <lineage>
        <taxon>Bacteria</taxon>
        <taxon>Pseudomonadati</taxon>
        <taxon>Pseudomonadota</taxon>
        <taxon>Gammaproteobacteria</taxon>
        <taxon>Vibrionales</taxon>
        <taxon>Vibrionaceae</taxon>
        <taxon>Vibrio</taxon>
    </lineage>
</organism>
<comment type="function">
    <text evidence="1">May be involved in the folding of the extracellular lipase during its passage through the periplasm.</text>
</comment>
<comment type="subcellular location">
    <subcellularLocation>
        <location evidence="1">Cell inner membrane</location>
        <topology evidence="1">Single-pass membrane protein</topology>
        <orientation evidence="1">Periplasmic side</orientation>
    </subcellularLocation>
</comment>
<comment type="similarity">
    <text evidence="3">Belongs to the lipase chaperone family.</text>
</comment>
<accession>Q7MK21</accession>
<feature type="chain" id="PRO_0000218489" description="Lipase chaperone">
    <location>
        <begin position="1"/>
        <end position="280"/>
    </location>
</feature>
<feature type="transmembrane region" description="Helical" evidence="2">
    <location>
        <begin position="5"/>
        <end position="22"/>
    </location>
</feature>